<feature type="chain" id="PRO_1000187132" description="D-ribose pyranase">
    <location>
        <begin position="1"/>
        <end position="131"/>
    </location>
</feature>
<feature type="active site" description="Proton donor" evidence="1">
    <location>
        <position position="20"/>
    </location>
</feature>
<feature type="binding site" evidence="1">
    <location>
        <position position="28"/>
    </location>
    <ligand>
        <name>substrate</name>
    </ligand>
</feature>
<feature type="binding site" evidence="1">
    <location>
        <position position="98"/>
    </location>
    <ligand>
        <name>substrate</name>
    </ligand>
</feature>
<feature type="binding site" evidence="1">
    <location>
        <begin position="120"/>
        <end position="122"/>
    </location>
    <ligand>
        <name>substrate</name>
    </ligand>
</feature>
<sequence>MKKHGVLNSEIASVLASLGHTDTIVIADCGLPIPAGVKRIDLAVEIGKPSFLDVLQVVADDMAIEKVTLAEEVINNNAEVNKEIELKLIEPAFEYVCHEQFKEHTKKAKAIIRTGEATPYANVILHAGVIF</sequence>
<proteinExistence type="inferred from homology"/>
<keyword id="KW-0119">Carbohydrate metabolism</keyword>
<keyword id="KW-0963">Cytoplasm</keyword>
<keyword id="KW-0413">Isomerase</keyword>
<gene>
    <name evidence="1" type="primary">rbsD</name>
    <name type="ordered locus">BCA_0704</name>
</gene>
<dbReference type="EC" id="5.4.99.62" evidence="1"/>
<dbReference type="EMBL" id="CP001407">
    <property type="protein sequence ID" value="ACO27783.1"/>
    <property type="molecule type" value="Genomic_DNA"/>
</dbReference>
<dbReference type="RefSeq" id="WP_000716157.1">
    <property type="nucleotide sequence ID" value="NZ_CP009318.1"/>
</dbReference>
<dbReference type="SMR" id="C1EXK2"/>
<dbReference type="KEGG" id="bcx:BCA_0704"/>
<dbReference type="PATRIC" id="fig|572264.18.peg.673"/>
<dbReference type="UniPathway" id="UPA00916">
    <property type="reaction ID" value="UER00888"/>
</dbReference>
<dbReference type="Proteomes" id="UP000002210">
    <property type="component" value="Chromosome"/>
</dbReference>
<dbReference type="GO" id="GO:0005829">
    <property type="term" value="C:cytosol"/>
    <property type="evidence" value="ECO:0007669"/>
    <property type="project" value="TreeGrafter"/>
</dbReference>
<dbReference type="GO" id="GO:0062193">
    <property type="term" value="F:D-ribose pyranase activity"/>
    <property type="evidence" value="ECO:0007669"/>
    <property type="project" value="UniProtKB-EC"/>
</dbReference>
<dbReference type="GO" id="GO:0016872">
    <property type="term" value="F:intramolecular lyase activity"/>
    <property type="evidence" value="ECO:0007669"/>
    <property type="project" value="UniProtKB-UniRule"/>
</dbReference>
<dbReference type="GO" id="GO:0048029">
    <property type="term" value="F:monosaccharide binding"/>
    <property type="evidence" value="ECO:0007669"/>
    <property type="project" value="InterPro"/>
</dbReference>
<dbReference type="GO" id="GO:0019303">
    <property type="term" value="P:D-ribose catabolic process"/>
    <property type="evidence" value="ECO:0007669"/>
    <property type="project" value="UniProtKB-UniRule"/>
</dbReference>
<dbReference type="FunFam" id="3.40.1650.10:FF:000003">
    <property type="entry name" value="D-ribose pyranase"/>
    <property type="match status" value="1"/>
</dbReference>
<dbReference type="Gene3D" id="3.40.1650.10">
    <property type="entry name" value="RbsD-like domain"/>
    <property type="match status" value="1"/>
</dbReference>
<dbReference type="HAMAP" id="MF_01661">
    <property type="entry name" value="D_rib_pyranase"/>
    <property type="match status" value="1"/>
</dbReference>
<dbReference type="InterPro" id="IPR023064">
    <property type="entry name" value="D-ribose_pyranase"/>
</dbReference>
<dbReference type="InterPro" id="IPR023750">
    <property type="entry name" value="RbsD-like_sf"/>
</dbReference>
<dbReference type="InterPro" id="IPR007721">
    <property type="entry name" value="RbsD_FucU"/>
</dbReference>
<dbReference type="NCBIfam" id="NF008761">
    <property type="entry name" value="PRK11797.1"/>
    <property type="match status" value="1"/>
</dbReference>
<dbReference type="PANTHER" id="PTHR37831">
    <property type="entry name" value="D-RIBOSE PYRANASE"/>
    <property type="match status" value="1"/>
</dbReference>
<dbReference type="PANTHER" id="PTHR37831:SF1">
    <property type="entry name" value="D-RIBOSE PYRANASE"/>
    <property type="match status" value="1"/>
</dbReference>
<dbReference type="Pfam" id="PF05025">
    <property type="entry name" value="RbsD_FucU"/>
    <property type="match status" value="1"/>
</dbReference>
<dbReference type="SUPFAM" id="SSF102546">
    <property type="entry name" value="RbsD-like"/>
    <property type="match status" value="1"/>
</dbReference>
<evidence type="ECO:0000255" key="1">
    <source>
        <dbReference type="HAMAP-Rule" id="MF_01661"/>
    </source>
</evidence>
<protein>
    <recommendedName>
        <fullName evidence="1">D-ribose pyranase</fullName>
        <ecNumber evidence="1">5.4.99.62</ecNumber>
    </recommendedName>
</protein>
<reference key="1">
    <citation type="submission" date="2009-02" db="EMBL/GenBank/DDBJ databases">
        <title>Genome sequence of Bacillus cereus 03BB102.</title>
        <authorList>
            <person name="Dodson R.J."/>
            <person name="Jackson P."/>
            <person name="Munk A.C."/>
            <person name="Brettin T."/>
            <person name="Bruce D."/>
            <person name="Detter C."/>
            <person name="Tapia R."/>
            <person name="Han C."/>
            <person name="Sutton G."/>
            <person name="Sims D."/>
        </authorList>
    </citation>
    <scope>NUCLEOTIDE SEQUENCE [LARGE SCALE GENOMIC DNA]</scope>
    <source>
        <strain>03BB102</strain>
    </source>
</reference>
<organism>
    <name type="scientific">Bacillus cereus (strain 03BB102)</name>
    <dbReference type="NCBI Taxonomy" id="572264"/>
    <lineage>
        <taxon>Bacteria</taxon>
        <taxon>Bacillati</taxon>
        <taxon>Bacillota</taxon>
        <taxon>Bacilli</taxon>
        <taxon>Bacillales</taxon>
        <taxon>Bacillaceae</taxon>
        <taxon>Bacillus</taxon>
        <taxon>Bacillus cereus group</taxon>
    </lineage>
</organism>
<name>RBSD_BACC3</name>
<comment type="function">
    <text evidence="1">Catalyzes the interconversion of beta-pyran and beta-furan forms of D-ribose.</text>
</comment>
<comment type="catalytic activity">
    <reaction evidence="1">
        <text>beta-D-ribopyranose = beta-D-ribofuranose</text>
        <dbReference type="Rhea" id="RHEA:25432"/>
        <dbReference type="ChEBI" id="CHEBI:27476"/>
        <dbReference type="ChEBI" id="CHEBI:47002"/>
        <dbReference type="EC" id="5.4.99.62"/>
    </reaction>
</comment>
<comment type="pathway">
    <text evidence="1">Carbohydrate metabolism; D-ribose degradation; D-ribose 5-phosphate from beta-D-ribopyranose: step 1/2.</text>
</comment>
<comment type="subunit">
    <text evidence="1">Homodecamer.</text>
</comment>
<comment type="subcellular location">
    <subcellularLocation>
        <location evidence="1">Cytoplasm</location>
    </subcellularLocation>
</comment>
<comment type="similarity">
    <text evidence="1">Belongs to the RbsD / FucU family. RbsD subfamily.</text>
</comment>
<accession>C1EXK2</accession>